<protein>
    <recommendedName>
        <fullName>DOPA 4,5-dioxygenase</fullName>
        <ecNumber>1.14.99.-</ecNumber>
    </recommendedName>
</protein>
<keyword id="KW-0963">Cytoplasm</keyword>
<keyword id="KW-0223">Dioxygenase</keyword>
<keyword id="KW-0903">Direct protein sequencing</keyword>
<keyword id="KW-0560">Oxidoreductase</keyword>
<comment type="function">
    <text>Extradiol dioxygenase that opens up the cyclic ring of DOPA between carbons 4 and 5 thus producing an unstable seco-DOPA that rearranges non-enzymatically to betalamic acid. Can also catalyze the formation of muscaflavin (a pigment found in the hygrocybe mushrooms family and of some amanita species only) by a 2,3-extradiol cleavage of DOPA.</text>
</comment>
<comment type="pathway">
    <text>Pigment biosynthesis; betalain biosynthesis.</text>
</comment>
<comment type="subunit">
    <text>Homodimer.</text>
</comment>
<comment type="subcellular location">
    <subcellularLocation>
        <location>Cytoplasm</location>
    </subcellularLocation>
</comment>
<comment type="tissue specificity">
    <text>Expressed at high level in coloured cap tissue and at least 10 times lower level in the stipe.</text>
</comment>
<comment type="online information" name="Protein Spotlight">
    <link uri="https://www.proteinspotlight.org/back_issues/001"/>
    <text>Pretty pigments - Issue 1 of September 2000</text>
</comment>
<proteinExistence type="evidence at protein level"/>
<organism>
    <name type="scientific">Amanita muscaria</name>
    <name type="common">Fly agaric</name>
    <name type="synonym">Agaricus muscarius</name>
    <dbReference type="NCBI Taxonomy" id="41956"/>
    <lineage>
        <taxon>Eukaryota</taxon>
        <taxon>Fungi</taxon>
        <taxon>Dikarya</taxon>
        <taxon>Basidiomycota</taxon>
        <taxon>Agaricomycotina</taxon>
        <taxon>Agaricomycetes</taxon>
        <taxon>Agaricomycetidae</taxon>
        <taxon>Agaricales</taxon>
        <taxon>Pluteineae</taxon>
        <taxon>Amanitaceae</taxon>
        <taxon>Amanita</taxon>
    </lineage>
</organism>
<reference key="1">
    <citation type="journal article" date="1997" name="Mol. Gen. Genet.">
        <title>The gene coding for the DOPA dioxygenase involved in betalain biosynthesis in Amanita muscaria and its regulation.</title>
        <authorList>
            <person name="Hinz U.G."/>
            <person name="Fivaz J."/>
            <person name="Girod P.-A."/>
            <person name="Zryd J.-P."/>
        </authorList>
    </citation>
    <scope>NUCLEOTIDE SEQUENCE [GENOMIC DNA]</scope>
    <scope>PROTEIN SEQUENCE OF 90-103; 140-158; 178-188 AND 206-215</scope>
    <source>
        <tissue>Cap</tissue>
    </source>
</reference>
<reference key="2">
    <citation type="journal article" date="1997" name="Planta">
        <title>Biochemical complementation of the betalain biosynthetic pathway in Portulaca grandiflora by a fungal 3,4-dihydroxyphenylalanine dioxygenase.</title>
        <authorList>
            <person name="Mueller L.A."/>
            <person name="Hinz U.G."/>
            <person name="Uze M."/>
            <person name="Sautter C."/>
            <person name="Zryd J.-P."/>
        </authorList>
    </citation>
    <scope>CHARACTERIZATION</scope>
</reference>
<reference key="3">
    <citation type="journal article" date="1997" name="Phytochemistry">
        <title>The formation of betalamic acid and muscaflavin by recombinant DOPA-dioxygenase from amanita.</title>
        <authorList>
            <person name="Mueller L.A."/>
            <person name="Hinz U.G."/>
            <person name="Zryd J.-P."/>
        </authorList>
    </citation>
    <scope>CHARACTERIZATION</scope>
</reference>
<sequence length="228" mass="26176">MVPSFVVYSSWVNGRQRYIRQAFASILFYIIRDTTLSFPSHTTMSTKPETDLQTVLDSEIKEWHFHIYFHQNNAAEHQAALELRDAVLRLRQDGAFVAVPLFRVNMDPMGPHPVGSYEIWVPSETFASVFSYLCMNRGRLSILVHPLTREELRDHEIRNAWIGPSFPLNLANLPIKSDEIPLQYPSLKLGYSSTAHKMSLEERRKLGDDIEAVLRGEKEAARAPHRDA</sequence>
<gene>
    <name type="primary">DODA</name>
</gene>
<feature type="chain" id="PRO_0000079972" description="DOPA 4,5-dioxygenase">
    <location>
        <begin position="1"/>
        <end position="228"/>
    </location>
</feature>
<name>DODA_AMAMU</name>
<accession>P87064</accession>
<dbReference type="EC" id="1.14.99.-"/>
<dbReference type="EMBL" id="Y12886">
    <property type="protein sequence ID" value="CAA73387.1"/>
    <property type="molecule type" value="Genomic_DNA"/>
</dbReference>
<dbReference type="SMR" id="P87064"/>
<dbReference type="KEGG" id="ag:CAA73387"/>
<dbReference type="UniPathway" id="UPA00278"/>
<dbReference type="GO" id="GO:0005737">
    <property type="term" value="C:cytoplasm"/>
    <property type="evidence" value="ECO:0007669"/>
    <property type="project" value="UniProtKB-SubCell"/>
</dbReference>
<dbReference type="GO" id="GO:0051213">
    <property type="term" value="F:dioxygenase activity"/>
    <property type="evidence" value="ECO:0007669"/>
    <property type="project" value="UniProtKB-KW"/>
</dbReference>
<dbReference type="Gene3D" id="3.30.70.1240">
    <property type="entry name" value="DOPA-like domains"/>
    <property type="match status" value="1"/>
</dbReference>
<dbReference type="InterPro" id="IPR023389">
    <property type="entry name" value="DOPA-like_sf"/>
</dbReference>
<dbReference type="InterPro" id="IPR014980">
    <property type="entry name" value="DOPA_dioxygen"/>
</dbReference>
<dbReference type="PANTHER" id="PTHR36423">
    <property type="entry name" value="AFR070WP"/>
    <property type="match status" value="1"/>
</dbReference>
<dbReference type="PANTHER" id="PTHR36423:SF2">
    <property type="entry name" value="AFR070WP"/>
    <property type="match status" value="1"/>
</dbReference>
<dbReference type="Pfam" id="PF08883">
    <property type="entry name" value="DOPA_dioxygen"/>
    <property type="match status" value="1"/>
</dbReference>
<dbReference type="SUPFAM" id="SSF143410">
    <property type="entry name" value="DOPA-like"/>
    <property type="match status" value="1"/>
</dbReference>